<accession>Q479S1</accession>
<name>ARLY_DECAR</name>
<organism>
    <name type="scientific">Dechloromonas aromatica (strain RCB)</name>
    <dbReference type="NCBI Taxonomy" id="159087"/>
    <lineage>
        <taxon>Bacteria</taxon>
        <taxon>Pseudomonadati</taxon>
        <taxon>Pseudomonadota</taxon>
        <taxon>Betaproteobacteria</taxon>
        <taxon>Rhodocyclales</taxon>
        <taxon>Azonexaceae</taxon>
        <taxon>Dechloromonas</taxon>
    </lineage>
</organism>
<keyword id="KW-0028">Amino-acid biosynthesis</keyword>
<keyword id="KW-0055">Arginine biosynthesis</keyword>
<keyword id="KW-0963">Cytoplasm</keyword>
<keyword id="KW-0456">Lyase</keyword>
<dbReference type="EC" id="4.3.2.1" evidence="1"/>
<dbReference type="EMBL" id="CP000089">
    <property type="protein sequence ID" value="AAZ48410.1"/>
    <property type="molecule type" value="Genomic_DNA"/>
</dbReference>
<dbReference type="SMR" id="Q479S1"/>
<dbReference type="STRING" id="159087.Daro_3681"/>
<dbReference type="KEGG" id="dar:Daro_3681"/>
<dbReference type="eggNOG" id="COG0165">
    <property type="taxonomic scope" value="Bacteria"/>
</dbReference>
<dbReference type="HOGENOM" id="CLU_027272_2_3_4"/>
<dbReference type="OrthoDB" id="9769623at2"/>
<dbReference type="UniPathway" id="UPA00068">
    <property type="reaction ID" value="UER00114"/>
</dbReference>
<dbReference type="GO" id="GO:0005829">
    <property type="term" value="C:cytosol"/>
    <property type="evidence" value="ECO:0007669"/>
    <property type="project" value="TreeGrafter"/>
</dbReference>
<dbReference type="GO" id="GO:0004056">
    <property type="term" value="F:argininosuccinate lyase activity"/>
    <property type="evidence" value="ECO:0007669"/>
    <property type="project" value="UniProtKB-UniRule"/>
</dbReference>
<dbReference type="GO" id="GO:0042450">
    <property type="term" value="P:arginine biosynthetic process via ornithine"/>
    <property type="evidence" value="ECO:0007669"/>
    <property type="project" value="InterPro"/>
</dbReference>
<dbReference type="GO" id="GO:0006526">
    <property type="term" value="P:L-arginine biosynthetic process"/>
    <property type="evidence" value="ECO:0007669"/>
    <property type="project" value="UniProtKB-UniRule"/>
</dbReference>
<dbReference type="CDD" id="cd01359">
    <property type="entry name" value="Argininosuccinate_lyase"/>
    <property type="match status" value="1"/>
</dbReference>
<dbReference type="FunFam" id="1.10.275.10:FF:000002">
    <property type="entry name" value="Argininosuccinate lyase"/>
    <property type="match status" value="1"/>
</dbReference>
<dbReference type="FunFam" id="1.10.40.30:FF:000001">
    <property type="entry name" value="Argininosuccinate lyase"/>
    <property type="match status" value="1"/>
</dbReference>
<dbReference type="FunFam" id="1.20.200.10:FF:000015">
    <property type="entry name" value="argininosuccinate lyase isoform X2"/>
    <property type="match status" value="1"/>
</dbReference>
<dbReference type="Gene3D" id="1.10.40.30">
    <property type="entry name" value="Fumarase/aspartase (C-terminal domain)"/>
    <property type="match status" value="1"/>
</dbReference>
<dbReference type="Gene3D" id="1.20.200.10">
    <property type="entry name" value="Fumarase/aspartase (Central domain)"/>
    <property type="match status" value="1"/>
</dbReference>
<dbReference type="Gene3D" id="1.10.275.10">
    <property type="entry name" value="Fumarase/aspartase (N-terminal domain)"/>
    <property type="match status" value="1"/>
</dbReference>
<dbReference type="HAMAP" id="MF_00006">
    <property type="entry name" value="Arg_succ_lyase"/>
    <property type="match status" value="1"/>
</dbReference>
<dbReference type="InterPro" id="IPR029419">
    <property type="entry name" value="Arg_succ_lyase_C"/>
</dbReference>
<dbReference type="InterPro" id="IPR009049">
    <property type="entry name" value="Argininosuccinate_lyase"/>
</dbReference>
<dbReference type="InterPro" id="IPR024083">
    <property type="entry name" value="Fumarase/histidase_N"/>
</dbReference>
<dbReference type="InterPro" id="IPR020557">
    <property type="entry name" value="Fumarate_lyase_CS"/>
</dbReference>
<dbReference type="InterPro" id="IPR000362">
    <property type="entry name" value="Fumarate_lyase_fam"/>
</dbReference>
<dbReference type="InterPro" id="IPR022761">
    <property type="entry name" value="Fumarate_lyase_N"/>
</dbReference>
<dbReference type="InterPro" id="IPR008948">
    <property type="entry name" value="L-Aspartase-like"/>
</dbReference>
<dbReference type="NCBIfam" id="TIGR00838">
    <property type="entry name" value="argH"/>
    <property type="match status" value="1"/>
</dbReference>
<dbReference type="PANTHER" id="PTHR43814">
    <property type="entry name" value="ARGININOSUCCINATE LYASE"/>
    <property type="match status" value="1"/>
</dbReference>
<dbReference type="PANTHER" id="PTHR43814:SF1">
    <property type="entry name" value="ARGININOSUCCINATE LYASE"/>
    <property type="match status" value="1"/>
</dbReference>
<dbReference type="Pfam" id="PF14698">
    <property type="entry name" value="ASL_C2"/>
    <property type="match status" value="1"/>
</dbReference>
<dbReference type="Pfam" id="PF00206">
    <property type="entry name" value="Lyase_1"/>
    <property type="match status" value="1"/>
</dbReference>
<dbReference type="PRINTS" id="PR00145">
    <property type="entry name" value="ARGSUCLYASE"/>
</dbReference>
<dbReference type="PRINTS" id="PR00149">
    <property type="entry name" value="FUMRATELYASE"/>
</dbReference>
<dbReference type="SUPFAM" id="SSF48557">
    <property type="entry name" value="L-aspartase-like"/>
    <property type="match status" value="1"/>
</dbReference>
<dbReference type="PROSITE" id="PS00163">
    <property type="entry name" value="FUMARATE_LYASES"/>
    <property type="match status" value="1"/>
</dbReference>
<comment type="catalytic activity">
    <reaction evidence="1">
        <text>2-(N(omega)-L-arginino)succinate = fumarate + L-arginine</text>
        <dbReference type="Rhea" id="RHEA:24020"/>
        <dbReference type="ChEBI" id="CHEBI:29806"/>
        <dbReference type="ChEBI" id="CHEBI:32682"/>
        <dbReference type="ChEBI" id="CHEBI:57472"/>
        <dbReference type="EC" id="4.3.2.1"/>
    </reaction>
</comment>
<comment type="pathway">
    <text evidence="1">Amino-acid biosynthesis; L-arginine biosynthesis; L-arginine from L-ornithine and carbamoyl phosphate: step 3/3.</text>
</comment>
<comment type="subcellular location">
    <subcellularLocation>
        <location evidence="1">Cytoplasm</location>
    </subcellularLocation>
</comment>
<comment type="similarity">
    <text evidence="1">Belongs to the lyase 1 family. Argininosuccinate lyase subfamily.</text>
</comment>
<protein>
    <recommendedName>
        <fullName evidence="1">Argininosuccinate lyase</fullName>
        <shortName evidence="1">ASAL</shortName>
        <ecNumber evidence="1">4.3.2.1</ecNumber>
    </recommendedName>
    <alternativeName>
        <fullName evidence="1">Arginosuccinase</fullName>
    </alternativeName>
</protein>
<proteinExistence type="inferred from homology"/>
<feature type="chain" id="PRO_0000240723" description="Argininosuccinate lyase">
    <location>
        <begin position="1"/>
        <end position="462"/>
    </location>
</feature>
<gene>
    <name evidence="1" type="primary">argH</name>
    <name type="ordered locus">Daro_3681</name>
</gene>
<sequence>MTSNANQYTWAGRFSEPVSDLVKRYTASVDFDQRMWRQDIRGSLAHARMLAKQGIIAAADLADIERGMAIVTEEIESGKFEWSLDLEDVHLNIEKRLTALVGDAGKRLHTGRSRNDQVATDIRLYLRDSIDDILVLIKAFRSALVDLAEKEAATPMPGFTHLQVAQPVTFGHHMLAYFEMFGRDAERYADCRKRVARLPLGAAALAGTTYPIDRAYVAEQLGFEGVCENSLDAVSDRDFAIEFTAACALLMMHISRLSEELVMWMSPRIGFIQIADRFCTGSSIMPQKKNPDVPELARGKTGRVYGQLMSLLTLMKSQPLAYNKDNQEDKEPLFDAVDTVTDTLRIFADMAGGITVRADNMKAALTQGFATATDLADYLVKKGLPFRDAHEAVGHAVKAAEQKGVDLPQLTLDELKAFCPQVESDVFAVLTVEGSLASRNHIGGTAPEQVRAAVARARQRLS</sequence>
<reference key="1">
    <citation type="journal article" date="2009" name="BMC Genomics">
        <title>Metabolic analysis of the soil microbe Dechloromonas aromatica str. RCB: indications of a surprisingly complex life-style and cryptic anaerobic pathways for aromatic degradation.</title>
        <authorList>
            <person name="Salinero K.K."/>
            <person name="Keller K."/>
            <person name="Feil W.S."/>
            <person name="Feil H."/>
            <person name="Trong S."/>
            <person name="Di Bartolo G."/>
            <person name="Lapidus A."/>
        </authorList>
    </citation>
    <scope>NUCLEOTIDE SEQUENCE [LARGE SCALE GENOMIC DNA]</scope>
    <source>
        <strain>RCB</strain>
    </source>
</reference>
<evidence type="ECO:0000255" key="1">
    <source>
        <dbReference type="HAMAP-Rule" id="MF_00006"/>
    </source>
</evidence>